<gene>
    <name evidence="1" type="primary">rpmI</name>
    <name type="ordered locus">VS_1230</name>
</gene>
<reference key="1">
    <citation type="submission" date="2009-02" db="EMBL/GenBank/DDBJ databases">
        <title>Vibrio splendidus str. LGP32 complete genome.</title>
        <authorList>
            <person name="Mazel D."/>
            <person name="Le Roux F."/>
        </authorList>
    </citation>
    <scope>NUCLEOTIDE SEQUENCE [LARGE SCALE GENOMIC DNA]</scope>
    <source>
        <strain>LGP32</strain>
    </source>
</reference>
<comment type="similarity">
    <text evidence="1">Belongs to the bacterial ribosomal protein bL35 family.</text>
</comment>
<keyword id="KW-0687">Ribonucleoprotein</keyword>
<keyword id="KW-0689">Ribosomal protein</keyword>
<evidence type="ECO:0000255" key="1">
    <source>
        <dbReference type="HAMAP-Rule" id="MF_00514"/>
    </source>
</evidence>
<evidence type="ECO:0000305" key="2"/>
<name>RL35_VIBA3</name>
<protein>
    <recommendedName>
        <fullName evidence="1">Large ribosomal subunit protein bL35</fullName>
    </recommendedName>
    <alternativeName>
        <fullName evidence="2">50S ribosomal protein L35</fullName>
    </alternativeName>
</protein>
<organism>
    <name type="scientific">Vibrio atlanticus (strain LGP32)</name>
    <name type="common">Vibrio splendidus (strain Mel32)</name>
    <dbReference type="NCBI Taxonomy" id="575788"/>
    <lineage>
        <taxon>Bacteria</taxon>
        <taxon>Pseudomonadati</taxon>
        <taxon>Pseudomonadota</taxon>
        <taxon>Gammaproteobacteria</taxon>
        <taxon>Vibrionales</taxon>
        <taxon>Vibrionaceae</taxon>
        <taxon>Vibrio</taxon>
    </lineage>
</organism>
<accession>B7VN19</accession>
<sequence>MPKMKTNKGAAKRFQKTAGGIKFKHAGKRHILTKRTTKNKRQLRPNSILPKCEVAQVLRMMPYA</sequence>
<dbReference type="EMBL" id="FM954972">
    <property type="protein sequence ID" value="CAV18360.1"/>
    <property type="molecule type" value="Genomic_DNA"/>
</dbReference>
<dbReference type="SMR" id="B7VN19"/>
<dbReference type="STRING" id="575788.VS_1230"/>
<dbReference type="KEGG" id="vsp:VS_1230"/>
<dbReference type="eggNOG" id="COG0291">
    <property type="taxonomic scope" value="Bacteria"/>
</dbReference>
<dbReference type="HOGENOM" id="CLU_169643_4_3_6"/>
<dbReference type="Proteomes" id="UP000009100">
    <property type="component" value="Chromosome 1"/>
</dbReference>
<dbReference type="GO" id="GO:0022625">
    <property type="term" value="C:cytosolic large ribosomal subunit"/>
    <property type="evidence" value="ECO:0007669"/>
    <property type="project" value="TreeGrafter"/>
</dbReference>
<dbReference type="GO" id="GO:0003735">
    <property type="term" value="F:structural constituent of ribosome"/>
    <property type="evidence" value="ECO:0007669"/>
    <property type="project" value="InterPro"/>
</dbReference>
<dbReference type="GO" id="GO:0006412">
    <property type="term" value="P:translation"/>
    <property type="evidence" value="ECO:0007669"/>
    <property type="project" value="UniProtKB-UniRule"/>
</dbReference>
<dbReference type="FunFam" id="4.10.410.60:FF:000001">
    <property type="entry name" value="50S ribosomal protein L35"/>
    <property type="match status" value="1"/>
</dbReference>
<dbReference type="Gene3D" id="4.10.410.60">
    <property type="match status" value="1"/>
</dbReference>
<dbReference type="HAMAP" id="MF_00514">
    <property type="entry name" value="Ribosomal_bL35"/>
    <property type="match status" value="1"/>
</dbReference>
<dbReference type="InterPro" id="IPR001706">
    <property type="entry name" value="Ribosomal_bL35"/>
</dbReference>
<dbReference type="InterPro" id="IPR021137">
    <property type="entry name" value="Ribosomal_bL35-like"/>
</dbReference>
<dbReference type="InterPro" id="IPR018265">
    <property type="entry name" value="Ribosomal_bL35_CS"/>
</dbReference>
<dbReference type="InterPro" id="IPR037229">
    <property type="entry name" value="Ribosomal_bL35_sf"/>
</dbReference>
<dbReference type="NCBIfam" id="TIGR00001">
    <property type="entry name" value="rpmI_bact"/>
    <property type="match status" value="1"/>
</dbReference>
<dbReference type="PANTHER" id="PTHR33343">
    <property type="entry name" value="54S RIBOSOMAL PROTEIN BL35M"/>
    <property type="match status" value="1"/>
</dbReference>
<dbReference type="PANTHER" id="PTHR33343:SF1">
    <property type="entry name" value="LARGE RIBOSOMAL SUBUNIT PROTEIN BL35M"/>
    <property type="match status" value="1"/>
</dbReference>
<dbReference type="Pfam" id="PF01632">
    <property type="entry name" value="Ribosomal_L35p"/>
    <property type="match status" value="1"/>
</dbReference>
<dbReference type="PRINTS" id="PR00064">
    <property type="entry name" value="RIBOSOMALL35"/>
</dbReference>
<dbReference type="SUPFAM" id="SSF143034">
    <property type="entry name" value="L35p-like"/>
    <property type="match status" value="1"/>
</dbReference>
<dbReference type="PROSITE" id="PS00936">
    <property type="entry name" value="RIBOSOMAL_L35"/>
    <property type="match status" value="1"/>
</dbReference>
<feature type="chain" id="PRO_1000194091" description="Large ribosomal subunit protein bL35">
    <location>
        <begin position="1"/>
        <end position="64"/>
    </location>
</feature>
<proteinExistence type="inferred from homology"/>